<dbReference type="EC" id="3.13.2.1"/>
<dbReference type="EMBL" id="M19937">
    <property type="protein sequence ID" value="AAA33165.1"/>
    <property type="molecule type" value="mRNA"/>
</dbReference>
<dbReference type="EMBL" id="AAFI02000003">
    <property type="protein sequence ID" value="EAL73161.1"/>
    <property type="molecule type" value="Genomic_DNA"/>
</dbReference>
<dbReference type="EMBL" id="X12523">
    <property type="protein sequence ID" value="CAA31040.1"/>
    <property type="status" value="ALT_FRAME"/>
    <property type="molecule type" value="mRNA"/>
</dbReference>
<dbReference type="PIR" id="A27655">
    <property type="entry name" value="A27655"/>
</dbReference>
<dbReference type="RefSeq" id="XP_647635.1">
    <property type="nucleotide sequence ID" value="XM_642543.1"/>
</dbReference>
<dbReference type="SMR" id="P10819"/>
<dbReference type="FunCoup" id="P10819">
    <property type="interactions" value="590"/>
</dbReference>
<dbReference type="STRING" id="44689.P10819"/>
<dbReference type="PaxDb" id="44689-DDB0191108"/>
<dbReference type="EnsemblProtists" id="EAL73161">
    <property type="protein sequence ID" value="EAL73161"/>
    <property type="gene ID" value="DDB_G0267418"/>
</dbReference>
<dbReference type="GeneID" id="8616450"/>
<dbReference type="KEGG" id="ddi:DDB_G0267418"/>
<dbReference type="dictyBase" id="DDB_G0267418">
    <property type="gene designation" value="sahA"/>
</dbReference>
<dbReference type="VEuPathDB" id="AmoebaDB:DDB_G0267418"/>
<dbReference type="eggNOG" id="KOG1370">
    <property type="taxonomic scope" value="Eukaryota"/>
</dbReference>
<dbReference type="HOGENOM" id="CLU_025194_2_1_1"/>
<dbReference type="InParanoid" id="P10819"/>
<dbReference type="OMA" id="YIGVTVE"/>
<dbReference type="PhylomeDB" id="P10819"/>
<dbReference type="Reactome" id="R-DDI-156581">
    <property type="pathway name" value="Methylation"/>
</dbReference>
<dbReference type="Reactome" id="R-DDI-1614635">
    <property type="pathway name" value="Sulfur amino acid metabolism"/>
</dbReference>
<dbReference type="UniPathway" id="UPA00314">
    <property type="reaction ID" value="UER00076"/>
</dbReference>
<dbReference type="PRO" id="PR:P10819"/>
<dbReference type="Proteomes" id="UP000002195">
    <property type="component" value="Chromosome 1"/>
</dbReference>
<dbReference type="GO" id="GO:0031002">
    <property type="term" value="C:actin rod"/>
    <property type="evidence" value="ECO:0000314"/>
    <property type="project" value="dictyBase"/>
</dbReference>
<dbReference type="GO" id="GO:0005938">
    <property type="term" value="C:cell cortex"/>
    <property type="evidence" value="ECO:0000314"/>
    <property type="project" value="dictyBase"/>
</dbReference>
<dbReference type="GO" id="GO:0005737">
    <property type="term" value="C:cytoplasm"/>
    <property type="evidence" value="ECO:0000314"/>
    <property type="project" value="dictyBase"/>
</dbReference>
<dbReference type="GO" id="GO:0005829">
    <property type="term" value="C:cytosol"/>
    <property type="evidence" value="ECO:0000318"/>
    <property type="project" value="GO_Central"/>
</dbReference>
<dbReference type="GO" id="GO:0031012">
    <property type="term" value="C:extracellular matrix"/>
    <property type="evidence" value="ECO:0007005"/>
    <property type="project" value="dictyBase"/>
</dbReference>
<dbReference type="GO" id="GO:0005634">
    <property type="term" value="C:nucleus"/>
    <property type="evidence" value="ECO:0000314"/>
    <property type="project" value="dictyBase"/>
</dbReference>
<dbReference type="GO" id="GO:0045335">
    <property type="term" value="C:phagocytic vesicle"/>
    <property type="evidence" value="ECO:0007005"/>
    <property type="project" value="dictyBase"/>
</dbReference>
<dbReference type="GO" id="GO:0004013">
    <property type="term" value="F:adenosylhomocysteinase activity"/>
    <property type="evidence" value="ECO:0000250"/>
    <property type="project" value="dictyBase"/>
</dbReference>
<dbReference type="GO" id="GO:0030552">
    <property type="term" value="F:cAMP binding"/>
    <property type="evidence" value="ECO:0000304"/>
    <property type="project" value="dictyBase"/>
</dbReference>
<dbReference type="GO" id="GO:0007163">
    <property type="term" value="P:establishment or maintenance of cell polarity"/>
    <property type="evidence" value="ECO:0000315"/>
    <property type="project" value="dictyBase"/>
</dbReference>
<dbReference type="GO" id="GO:0006730">
    <property type="term" value="P:one-carbon metabolic process"/>
    <property type="evidence" value="ECO:0007669"/>
    <property type="project" value="UniProtKB-KW"/>
</dbReference>
<dbReference type="GO" id="GO:0033353">
    <property type="term" value="P:S-adenosylmethionine cycle"/>
    <property type="evidence" value="ECO:0000318"/>
    <property type="project" value="GO_Central"/>
</dbReference>
<dbReference type="CDD" id="cd00401">
    <property type="entry name" value="SAHH"/>
    <property type="match status" value="1"/>
</dbReference>
<dbReference type="FunFam" id="3.40.50.1480:FF:000004">
    <property type="entry name" value="Adenosylhomocysteinase"/>
    <property type="match status" value="1"/>
</dbReference>
<dbReference type="FunFam" id="3.40.50.1480:FF:000007">
    <property type="entry name" value="Adenosylhomocysteinase"/>
    <property type="match status" value="1"/>
</dbReference>
<dbReference type="FunFam" id="3.40.50.720:FF:000004">
    <property type="entry name" value="Adenosylhomocysteinase"/>
    <property type="match status" value="1"/>
</dbReference>
<dbReference type="Gene3D" id="3.40.50.1480">
    <property type="entry name" value="Adenosylhomocysteinase-like"/>
    <property type="match status" value="3"/>
</dbReference>
<dbReference type="Gene3D" id="3.40.50.720">
    <property type="entry name" value="NAD(P)-binding Rossmann-like Domain"/>
    <property type="match status" value="1"/>
</dbReference>
<dbReference type="HAMAP" id="MF_00563">
    <property type="entry name" value="AdoHcyase"/>
    <property type="match status" value="1"/>
</dbReference>
<dbReference type="InterPro" id="IPR042172">
    <property type="entry name" value="Adenosylhomocyst_ase-like_sf"/>
</dbReference>
<dbReference type="InterPro" id="IPR000043">
    <property type="entry name" value="Adenosylhomocysteinase-like"/>
</dbReference>
<dbReference type="InterPro" id="IPR015878">
    <property type="entry name" value="Ado_hCys_hydrolase_NAD-bd"/>
</dbReference>
<dbReference type="InterPro" id="IPR036291">
    <property type="entry name" value="NAD(P)-bd_dom_sf"/>
</dbReference>
<dbReference type="InterPro" id="IPR020082">
    <property type="entry name" value="S-Ado-L-homoCys_hydrolase_CS"/>
</dbReference>
<dbReference type="NCBIfam" id="TIGR00936">
    <property type="entry name" value="ahcY"/>
    <property type="match status" value="1"/>
</dbReference>
<dbReference type="NCBIfam" id="NF004005">
    <property type="entry name" value="PRK05476.2-3"/>
    <property type="match status" value="1"/>
</dbReference>
<dbReference type="PANTHER" id="PTHR23420">
    <property type="entry name" value="ADENOSYLHOMOCYSTEINASE"/>
    <property type="match status" value="1"/>
</dbReference>
<dbReference type="PANTHER" id="PTHR23420:SF0">
    <property type="entry name" value="ADENOSYLHOMOCYSTEINASE"/>
    <property type="match status" value="1"/>
</dbReference>
<dbReference type="Pfam" id="PF05221">
    <property type="entry name" value="AdoHcyase"/>
    <property type="match status" value="1"/>
</dbReference>
<dbReference type="Pfam" id="PF00670">
    <property type="entry name" value="AdoHcyase_NAD"/>
    <property type="match status" value="1"/>
</dbReference>
<dbReference type="PIRSF" id="PIRSF001109">
    <property type="entry name" value="Ad_hcy_hydrolase"/>
    <property type="match status" value="1"/>
</dbReference>
<dbReference type="SMART" id="SM00996">
    <property type="entry name" value="AdoHcyase"/>
    <property type="match status" value="1"/>
</dbReference>
<dbReference type="SMART" id="SM00997">
    <property type="entry name" value="AdoHcyase_NAD"/>
    <property type="match status" value="1"/>
</dbReference>
<dbReference type="SUPFAM" id="SSF52283">
    <property type="entry name" value="Formate/glycerate dehydrogenase catalytic domain-like"/>
    <property type="match status" value="1"/>
</dbReference>
<dbReference type="SUPFAM" id="SSF51735">
    <property type="entry name" value="NAD(P)-binding Rossmann-fold domains"/>
    <property type="match status" value="1"/>
</dbReference>
<dbReference type="PROSITE" id="PS00738">
    <property type="entry name" value="ADOHCYASE_1"/>
    <property type="match status" value="1"/>
</dbReference>
<dbReference type="PROSITE" id="PS00739">
    <property type="entry name" value="ADOHCYASE_2"/>
    <property type="match status" value="1"/>
</dbReference>
<sequence length="431" mass="47280">MTKLHYKVKDISLAAWGRKEIEIAENEMPGLMTLRKKYGPAQILKGARIAGCLHMTIQTAVLIETLTALGAQVQWSSCNIFSTQDQAAAAIAATGVPVYAWKGETEEEYNWCVEQTIVFQDGQPLNMILDDGGDLTNLVHEKYPQFLAGIKGISEETTTGVHNLYKMFKEGKLKVPAINVNDSVTKSKFDNLYGCRESLIDGIKRATDVMIAGKVAVVAGYGDVGKGCAQSLSKMGARVLVTEIDPINALQACMDGYQIVTMETAAPLSNIFVTTTGCRDIVRGEHFAVMKEDAIVCNIGHFDCEIDVAWLNANAKKDTVKPQVDRYTLANGVHIILLAEGRLVNLGCGTGHPSFVMSNSFCNQTLAQIALWTKTEEYPLGVHFLPKILDEEVARLHLDQLGAKLTTLTEKQSEYLSVPVAGPYKVDHYRY</sequence>
<name>SAHH_DICDI</name>
<feature type="chain" id="PRO_0000116911" description="Adenosylhomocysteinase">
    <location>
        <begin position="1"/>
        <end position="431"/>
    </location>
</feature>
<feature type="binding site" evidence="1">
    <location>
        <position position="56"/>
    </location>
    <ligand>
        <name>substrate</name>
    </ligand>
</feature>
<feature type="binding site" evidence="1">
    <location>
        <position position="131"/>
    </location>
    <ligand>
        <name>substrate</name>
    </ligand>
</feature>
<feature type="binding site" evidence="1">
    <location>
        <position position="156"/>
    </location>
    <ligand>
        <name>substrate</name>
    </ligand>
</feature>
<feature type="binding site" evidence="1">
    <location>
        <begin position="157"/>
        <end position="159"/>
    </location>
    <ligand>
        <name>NAD(+)</name>
        <dbReference type="ChEBI" id="CHEBI:57540"/>
    </ligand>
</feature>
<feature type="binding site" evidence="1">
    <location>
        <position position="186"/>
    </location>
    <ligand>
        <name>substrate</name>
    </ligand>
</feature>
<feature type="binding site" evidence="1">
    <location>
        <position position="190"/>
    </location>
    <ligand>
        <name>substrate</name>
    </ligand>
</feature>
<feature type="binding site" evidence="1">
    <location>
        <position position="191"/>
    </location>
    <ligand>
        <name>NAD(+)</name>
        <dbReference type="ChEBI" id="CHEBI:57540"/>
    </ligand>
</feature>
<feature type="binding site" evidence="1">
    <location>
        <begin position="222"/>
        <end position="227"/>
    </location>
    <ligand>
        <name>NAD(+)</name>
        <dbReference type="ChEBI" id="CHEBI:57540"/>
    </ligand>
</feature>
<feature type="binding site" evidence="1">
    <location>
        <position position="243"/>
    </location>
    <ligand>
        <name>NAD(+)</name>
        <dbReference type="ChEBI" id="CHEBI:57540"/>
    </ligand>
</feature>
<feature type="binding site" evidence="1">
    <location>
        <begin position="299"/>
        <end position="301"/>
    </location>
    <ligand>
        <name>NAD(+)</name>
        <dbReference type="ChEBI" id="CHEBI:57540"/>
    </ligand>
</feature>
<feature type="binding site" evidence="1">
    <location>
        <position position="345"/>
    </location>
    <ligand>
        <name>NAD(+)</name>
        <dbReference type="ChEBI" id="CHEBI:57540"/>
    </ligand>
</feature>
<feature type="sequence conflict" description="In Ref. 1; AAA33165." evidence="2" ref="1">
    <original>E</original>
    <variation>A</variation>
    <location>
        <position position="25"/>
    </location>
</feature>
<feature type="sequence conflict" description="In Ref. 1; AAA33165." evidence="2" ref="1">
    <location>
        <position position="123"/>
    </location>
</feature>
<feature type="sequence conflict" description="In Ref. 1; AAA33165." evidence="2" ref="1">
    <original>N</original>
    <variation>T</variation>
    <location>
        <position position="137"/>
    </location>
</feature>
<feature type="sequence conflict" description="In Ref. 1; AAA33165." evidence="2" ref="1">
    <original>T</original>
    <variation>H</variation>
    <location>
        <position position="159"/>
    </location>
</feature>
<feature type="sequence conflict" description="In Ref. 3; CAA31040." evidence="2" ref="3">
    <original>A</original>
    <variation>G</variation>
    <location>
        <position position="313"/>
    </location>
</feature>
<feature type="sequence conflict" description="In Ref. 3; CAA31040." evidence="2" ref="3">
    <original>D</original>
    <variation>S</variation>
    <location>
        <position position="325"/>
    </location>
</feature>
<feature type="sequence conflict" description="In Ref. 3; CAA31040." evidence="2" ref="3">
    <original>FCNQT</original>
    <variation>SVTK</variation>
    <location>
        <begin position="361"/>
        <end position="365"/>
    </location>
</feature>
<feature type="sequence conflict" description="In Ref. 1; AAA33165." evidence="2" ref="1">
    <original>F</original>
    <variation>L</variation>
    <location>
        <position position="384"/>
    </location>
</feature>
<comment type="function">
    <text>Adenosylhomocysteine is a competitive inhibitor of S-adenosyl-L-methionine-dependent methyl transferase reactions; therefore adenosylhomocysteinase may play a key role in the control of methylations via regulation of the intracellular concentration of adenosylhomocysteine.</text>
</comment>
<comment type="catalytic activity">
    <reaction>
        <text>S-adenosyl-L-homocysteine + H2O = L-homocysteine + adenosine</text>
        <dbReference type="Rhea" id="RHEA:21708"/>
        <dbReference type="ChEBI" id="CHEBI:15377"/>
        <dbReference type="ChEBI" id="CHEBI:16335"/>
        <dbReference type="ChEBI" id="CHEBI:57856"/>
        <dbReference type="ChEBI" id="CHEBI:58199"/>
        <dbReference type="EC" id="3.13.2.1"/>
    </reaction>
</comment>
<comment type="cofactor">
    <cofactor>
        <name>NAD(+)</name>
        <dbReference type="ChEBI" id="CHEBI:57540"/>
    </cofactor>
    <text>Binds 1 NAD(+) per subunit.</text>
</comment>
<comment type="pathway">
    <text>Amino-acid biosynthesis; L-homocysteine biosynthesis; L-homocysteine from S-adenosyl-L-homocysteine: step 1/1.</text>
</comment>
<comment type="subunit">
    <text>Homotetramer.</text>
</comment>
<comment type="similarity">
    <text evidence="2">Belongs to the adenosylhomocysteinase family.</text>
</comment>
<comment type="sequence caution" evidence="2">
    <conflict type="frameshift">
        <sequence resource="EMBL-CDS" id="CAA31040"/>
    </conflict>
</comment>
<keyword id="KW-0378">Hydrolase</keyword>
<keyword id="KW-0520">NAD</keyword>
<keyword id="KW-0554">One-carbon metabolism</keyword>
<keyword id="KW-1185">Reference proteome</keyword>
<reference key="1">
    <citation type="journal article" date="1988" name="Biochem. Biophys. Res. Commun.">
        <title>Amino acid sequence of S-adenosyl-L-homocysteine hydrolase from Dictyostelium discoideum as deduced from the cDNA sequence.</title>
        <authorList>
            <person name="Kasir J."/>
            <person name="Aksamit R.R."/>
            <person name="Backlund P.S. Jr."/>
            <person name="Cantoni G.L."/>
        </authorList>
    </citation>
    <scope>NUCLEOTIDE SEQUENCE [MRNA]</scope>
</reference>
<reference key="2">
    <citation type="journal article" date="2005" name="Nature">
        <title>The genome of the social amoeba Dictyostelium discoideum.</title>
        <authorList>
            <person name="Eichinger L."/>
            <person name="Pachebat J.A."/>
            <person name="Gloeckner G."/>
            <person name="Rajandream M.A."/>
            <person name="Sucgang R."/>
            <person name="Berriman M."/>
            <person name="Song J."/>
            <person name="Olsen R."/>
            <person name="Szafranski K."/>
            <person name="Xu Q."/>
            <person name="Tunggal B."/>
            <person name="Kummerfeld S."/>
            <person name="Madera M."/>
            <person name="Konfortov B.A."/>
            <person name="Rivero F."/>
            <person name="Bankier A.T."/>
            <person name="Lehmann R."/>
            <person name="Hamlin N."/>
            <person name="Davies R."/>
            <person name="Gaudet P."/>
            <person name="Fey P."/>
            <person name="Pilcher K."/>
            <person name="Chen G."/>
            <person name="Saunders D."/>
            <person name="Sodergren E.J."/>
            <person name="Davis P."/>
            <person name="Kerhornou A."/>
            <person name="Nie X."/>
            <person name="Hall N."/>
            <person name="Anjard C."/>
            <person name="Hemphill L."/>
            <person name="Bason N."/>
            <person name="Farbrother P."/>
            <person name="Desany B."/>
            <person name="Just E."/>
            <person name="Morio T."/>
            <person name="Rost R."/>
            <person name="Churcher C.M."/>
            <person name="Cooper J."/>
            <person name="Haydock S."/>
            <person name="van Driessche N."/>
            <person name="Cronin A."/>
            <person name="Goodhead I."/>
            <person name="Muzny D.M."/>
            <person name="Mourier T."/>
            <person name="Pain A."/>
            <person name="Lu M."/>
            <person name="Harper D."/>
            <person name="Lindsay R."/>
            <person name="Hauser H."/>
            <person name="James K.D."/>
            <person name="Quiles M."/>
            <person name="Madan Babu M."/>
            <person name="Saito T."/>
            <person name="Buchrieser C."/>
            <person name="Wardroper A."/>
            <person name="Felder M."/>
            <person name="Thangavelu M."/>
            <person name="Johnson D."/>
            <person name="Knights A."/>
            <person name="Loulseged H."/>
            <person name="Mungall K.L."/>
            <person name="Oliver K."/>
            <person name="Price C."/>
            <person name="Quail M.A."/>
            <person name="Urushihara H."/>
            <person name="Hernandez J."/>
            <person name="Rabbinowitsch E."/>
            <person name="Steffen D."/>
            <person name="Sanders M."/>
            <person name="Ma J."/>
            <person name="Kohara Y."/>
            <person name="Sharp S."/>
            <person name="Simmonds M.N."/>
            <person name="Spiegler S."/>
            <person name="Tivey A."/>
            <person name="Sugano S."/>
            <person name="White B."/>
            <person name="Walker D."/>
            <person name="Woodward J.R."/>
            <person name="Winckler T."/>
            <person name="Tanaka Y."/>
            <person name="Shaulsky G."/>
            <person name="Schleicher M."/>
            <person name="Weinstock G.M."/>
            <person name="Rosenthal A."/>
            <person name="Cox E.C."/>
            <person name="Chisholm R.L."/>
            <person name="Gibbs R.A."/>
            <person name="Loomis W.F."/>
            <person name="Platzer M."/>
            <person name="Kay R.R."/>
            <person name="Williams J.G."/>
            <person name="Dear P.H."/>
            <person name="Noegel A.A."/>
            <person name="Barrell B.G."/>
            <person name="Kuspa A."/>
        </authorList>
    </citation>
    <scope>NUCLEOTIDE SEQUENCE [LARGE SCALE GENOMIC DNA]</scope>
    <source>
        <strain>AX4</strain>
    </source>
</reference>
<reference key="3">
    <citation type="journal article" date="1988" name="Biochimie">
        <title>Cloning of a cDNA for the S-adenosyl-L-homocysteine hydrolase from Dictyostelium discoideum.</title>
        <authorList>
            <person name="Guitton M.C."/>
            <person name="Part D."/>
            <person name="Veron M."/>
        </authorList>
    </citation>
    <scope>NUCLEOTIDE SEQUENCE [MRNA] OF 256-431</scope>
</reference>
<reference key="4">
    <citation type="journal article" date="2006" name="Eur. J. Cell Biol.">
        <title>Identification and isolation of Dictyostelium microtubule-associated protein interactors by tandem affinity purification.</title>
        <authorList>
            <person name="Koch K.V."/>
            <person name="Reinders Y."/>
            <person name="Ho T.-H."/>
            <person name="Sickmann A."/>
            <person name="Graef R."/>
        </authorList>
    </citation>
    <scope>IDENTIFICATION BY MASS SPECTROMETRY [LARGE SCALE ANALYSIS]</scope>
    <source>
        <strain>AX2</strain>
    </source>
</reference>
<reference key="5">
    <citation type="journal article" date="2006" name="Mol. Cell. Proteomics">
        <title>Proteomics fingerprinting of phagosome maturation and evidence for the role of a Galpha during uptake.</title>
        <authorList>
            <person name="Gotthardt D."/>
            <person name="Blancheteau V."/>
            <person name="Bosserhoff A."/>
            <person name="Ruppert T."/>
            <person name="Delorenzi M."/>
            <person name="Soldati T."/>
        </authorList>
    </citation>
    <scope>IDENTIFICATION BY MASS SPECTROMETRY [LARGE SCALE ANALYSIS]</scope>
    <source>
        <strain>AX2</strain>
    </source>
</reference>
<accession>P10819</accession>
<accession>Q55F98</accession>
<evidence type="ECO:0000250" key="1"/>
<evidence type="ECO:0000305" key="2"/>
<protein>
    <recommendedName>
        <fullName>Adenosylhomocysteinase</fullName>
        <shortName>AdoHcyase</shortName>
        <ecNumber>3.13.2.1</ecNumber>
    </recommendedName>
    <alternativeName>
        <fullName>S-adenosyl-L-homocysteine hydrolase</fullName>
    </alternativeName>
</protein>
<gene>
    <name type="primary">sahA</name>
    <name type="ORF">DDB_G0267418</name>
</gene>
<proteinExistence type="evidence at protein level"/>
<organism>
    <name type="scientific">Dictyostelium discoideum</name>
    <name type="common">Social amoeba</name>
    <dbReference type="NCBI Taxonomy" id="44689"/>
    <lineage>
        <taxon>Eukaryota</taxon>
        <taxon>Amoebozoa</taxon>
        <taxon>Evosea</taxon>
        <taxon>Eumycetozoa</taxon>
        <taxon>Dictyostelia</taxon>
        <taxon>Dictyosteliales</taxon>
        <taxon>Dictyosteliaceae</taxon>
        <taxon>Dictyostelium</taxon>
    </lineage>
</organism>